<comment type="function">
    <text evidence="1 3">Alternate catalytic subunit of the 1,3-beta-glucan synthase (GS) complex (By similarity). Synthesizes 1,3-beta-glucan, a major structural component of the fungal cell wall (By similarity). Required for the assembly of the division septum and maintenance of cell polarity (PubMed:10545452).</text>
</comment>
<comment type="catalytic activity">
    <reaction evidence="1">
        <text>[(1-&gt;3)-beta-D-glucosyl](n) + UDP-alpha-D-glucose = [(1-&gt;3)-beta-D-glucosyl](n+1) + UDP + H(+)</text>
        <dbReference type="Rhea" id="RHEA:21476"/>
        <dbReference type="Rhea" id="RHEA-COMP:11146"/>
        <dbReference type="Rhea" id="RHEA-COMP:14303"/>
        <dbReference type="ChEBI" id="CHEBI:15378"/>
        <dbReference type="ChEBI" id="CHEBI:37671"/>
        <dbReference type="ChEBI" id="CHEBI:58223"/>
        <dbReference type="ChEBI" id="CHEBI:58885"/>
        <dbReference type="EC" id="2.4.1.34"/>
    </reaction>
</comment>
<comment type="subunit">
    <text evidence="1">Component of the 1,3-beta-glucan synthase (GS) complex, composed of at least the alternate catalytic subunits bgs1, bgs2, bgs3, and bgs4, and a regulatory subunit chr4.</text>
</comment>
<comment type="subcellular location">
    <subcellularLocation>
        <location evidence="4">Cell membrane</location>
        <topology evidence="2">Multi-pass membrane protein</topology>
    </subcellularLocation>
    <subcellularLocation>
        <location evidence="4">Cell septum</location>
    </subcellularLocation>
    <text evidence="4">Localizes to actively growing cell ends. Following nuclear division, relocalizes to the future site of cell division.</text>
</comment>
<comment type="similarity">
    <text evidence="8">Belongs to the glycosyltransferase 48 family.</text>
</comment>
<protein>
    <recommendedName>
        <fullName>1,3-beta-glucan synthase component bgs1</fullName>
        <ecNumber evidence="1">2.4.1.34</ecNumber>
    </recommendedName>
    <alternativeName>
        <fullName>1,3-beta-D-glucan-UDP glucosyltransferase</fullName>
    </alternativeName>
</protein>
<feature type="chain" id="PRO_0000121721" description="1,3-beta-glucan synthase component bgs1">
    <location>
        <begin position="1"/>
        <end position="1729"/>
    </location>
</feature>
<feature type="transmembrane region" description="Helical" evidence="2">
    <location>
        <begin position="378"/>
        <end position="398"/>
    </location>
</feature>
<feature type="transmembrane region" description="Helical" evidence="2">
    <location>
        <begin position="416"/>
        <end position="436"/>
    </location>
</feature>
<feature type="transmembrane region" description="Helical" evidence="2">
    <location>
        <begin position="448"/>
        <end position="468"/>
    </location>
</feature>
<feature type="transmembrane region" description="Helical" evidence="2">
    <location>
        <begin position="503"/>
        <end position="523"/>
    </location>
</feature>
<feature type="transmembrane region" description="Helical" evidence="2">
    <location>
        <begin position="546"/>
        <end position="566"/>
    </location>
</feature>
<feature type="transmembrane region" description="Helical" evidence="2">
    <location>
        <begin position="577"/>
        <end position="597"/>
    </location>
</feature>
<feature type="transmembrane region" description="Helical" evidence="2">
    <location>
        <begin position="1180"/>
        <end position="1200"/>
    </location>
</feature>
<feature type="transmembrane region" description="Helical" evidence="2">
    <location>
        <begin position="1237"/>
        <end position="1257"/>
    </location>
</feature>
<feature type="transmembrane region" description="Helical" evidence="2">
    <location>
        <begin position="1337"/>
        <end position="1357"/>
    </location>
</feature>
<feature type="transmembrane region" description="Helical" evidence="2">
    <location>
        <begin position="1440"/>
        <end position="1460"/>
    </location>
</feature>
<feature type="transmembrane region" description="Helical" evidence="2">
    <location>
        <begin position="1484"/>
        <end position="1504"/>
    </location>
</feature>
<feature type="transmembrane region" description="Helical" evidence="2">
    <location>
        <begin position="1515"/>
        <end position="1535"/>
    </location>
</feature>
<feature type="transmembrane region" description="Helical" evidence="2">
    <location>
        <begin position="1550"/>
        <end position="1572"/>
    </location>
</feature>
<feature type="transmembrane region" description="Helical" evidence="2">
    <location>
        <begin position="1678"/>
        <end position="1698"/>
    </location>
</feature>
<feature type="modified residue" description="Phosphoserine" evidence="5">
    <location>
        <position position="23"/>
    </location>
</feature>
<feature type="modified residue" description="Phosphoserine" evidence="5">
    <location>
        <position position="784"/>
    </location>
</feature>
<feature type="modified residue" description="Phosphoserine" evidence="5">
    <location>
        <position position="788"/>
    </location>
</feature>
<keyword id="KW-0131">Cell cycle</keyword>
<keyword id="KW-0132">Cell division</keyword>
<keyword id="KW-1003">Cell membrane</keyword>
<keyword id="KW-0328">Glycosyltransferase</keyword>
<keyword id="KW-0472">Membrane</keyword>
<keyword id="KW-0597">Phosphoprotein</keyword>
<keyword id="KW-1185">Reference proteome</keyword>
<keyword id="KW-0808">Transferase</keyword>
<keyword id="KW-0812">Transmembrane</keyword>
<keyword id="KW-1133">Transmembrane helix</keyword>
<reference key="1">
    <citation type="journal article" date="1997" name="J. Bacteriol.">
        <title>cps1+, a Schizosaccharomyces pombe gene homolog of Saccharomyces cerevisiae FKS genes whose mutation confers hypersensitivity to cyclosporin A and papulacandin B.</title>
        <authorList>
            <person name="Ishiguro J."/>
            <person name="Saitou A."/>
            <person name="Duran A."/>
            <person name="Ribas J.C."/>
        </authorList>
    </citation>
    <scope>NUCLEOTIDE SEQUENCE [GENOMIC DNA]</scope>
    <source>
        <strain>972 / ATCC 24843</strain>
    </source>
</reference>
<reference key="2">
    <citation type="journal article" date="1999" name="Genetics">
        <title>Drc1p/Cps1p, a 1,3-beta-glucan synthase subunit, is essential for division septum assembly in Schizosaccharomyces pombe.</title>
        <authorList>
            <person name="Liu J."/>
            <person name="Wang H."/>
            <person name="McCollum D."/>
            <person name="Balasubramanian M.K."/>
        </authorList>
    </citation>
    <scope>NUCLEOTIDE SEQUENCE [GENOMIC DNA]</scope>
    <scope>FUNCTION</scope>
</reference>
<reference key="3">
    <citation type="journal article" date="1999" name="Mol. Gen. Genet.">
        <title>Analysis of the cps1 gene provides evidence for a septation checkpoint in Schizosaccharomyces pombe.</title>
        <authorList>
            <person name="Le Goff X."/>
            <person name="Woollard A."/>
            <person name="Simanis V."/>
        </authorList>
    </citation>
    <scope>NUCLEOTIDE SEQUENCE [GENOMIC DNA]</scope>
</reference>
<reference key="4">
    <citation type="journal article" date="2002" name="Nature">
        <title>The genome sequence of Schizosaccharomyces pombe.</title>
        <authorList>
            <person name="Wood V."/>
            <person name="Gwilliam R."/>
            <person name="Rajandream M.A."/>
            <person name="Lyne M.H."/>
            <person name="Lyne R."/>
            <person name="Stewart A."/>
            <person name="Sgouros J.G."/>
            <person name="Peat N."/>
            <person name="Hayles J."/>
            <person name="Baker S.G."/>
            <person name="Basham D."/>
            <person name="Bowman S."/>
            <person name="Brooks K."/>
            <person name="Brown D."/>
            <person name="Brown S."/>
            <person name="Chillingworth T."/>
            <person name="Churcher C.M."/>
            <person name="Collins M."/>
            <person name="Connor R."/>
            <person name="Cronin A."/>
            <person name="Davis P."/>
            <person name="Feltwell T."/>
            <person name="Fraser A."/>
            <person name="Gentles S."/>
            <person name="Goble A."/>
            <person name="Hamlin N."/>
            <person name="Harris D.E."/>
            <person name="Hidalgo J."/>
            <person name="Hodgson G."/>
            <person name="Holroyd S."/>
            <person name="Hornsby T."/>
            <person name="Howarth S."/>
            <person name="Huckle E.J."/>
            <person name="Hunt S."/>
            <person name="Jagels K."/>
            <person name="James K.D."/>
            <person name="Jones L."/>
            <person name="Jones M."/>
            <person name="Leather S."/>
            <person name="McDonald S."/>
            <person name="McLean J."/>
            <person name="Mooney P."/>
            <person name="Moule S."/>
            <person name="Mungall K.L."/>
            <person name="Murphy L.D."/>
            <person name="Niblett D."/>
            <person name="Odell C."/>
            <person name="Oliver K."/>
            <person name="O'Neil S."/>
            <person name="Pearson D."/>
            <person name="Quail M.A."/>
            <person name="Rabbinowitsch E."/>
            <person name="Rutherford K.M."/>
            <person name="Rutter S."/>
            <person name="Saunders D."/>
            <person name="Seeger K."/>
            <person name="Sharp S."/>
            <person name="Skelton J."/>
            <person name="Simmonds M.N."/>
            <person name="Squares R."/>
            <person name="Squares S."/>
            <person name="Stevens K."/>
            <person name="Taylor K."/>
            <person name="Taylor R.G."/>
            <person name="Tivey A."/>
            <person name="Walsh S.V."/>
            <person name="Warren T."/>
            <person name="Whitehead S."/>
            <person name="Woodward J.R."/>
            <person name="Volckaert G."/>
            <person name="Aert R."/>
            <person name="Robben J."/>
            <person name="Grymonprez B."/>
            <person name="Weltjens I."/>
            <person name="Vanstreels E."/>
            <person name="Rieger M."/>
            <person name="Schaefer M."/>
            <person name="Mueller-Auer S."/>
            <person name="Gabel C."/>
            <person name="Fuchs M."/>
            <person name="Duesterhoeft A."/>
            <person name="Fritzc C."/>
            <person name="Holzer E."/>
            <person name="Moestl D."/>
            <person name="Hilbert H."/>
            <person name="Borzym K."/>
            <person name="Langer I."/>
            <person name="Beck A."/>
            <person name="Lehrach H."/>
            <person name="Reinhardt R."/>
            <person name="Pohl T.M."/>
            <person name="Eger P."/>
            <person name="Zimmermann W."/>
            <person name="Wedler H."/>
            <person name="Wambutt R."/>
            <person name="Purnelle B."/>
            <person name="Goffeau A."/>
            <person name="Cadieu E."/>
            <person name="Dreano S."/>
            <person name="Gloux S."/>
            <person name="Lelaure V."/>
            <person name="Mottier S."/>
            <person name="Galibert F."/>
            <person name="Aves S.J."/>
            <person name="Xiang Z."/>
            <person name="Hunt C."/>
            <person name="Moore K."/>
            <person name="Hurst S.M."/>
            <person name="Lucas M."/>
            <person name="Rochet M."/>
            <person name="Gaillardin C."/>
            <person name="Tallada V.A."/>
            <person name="Garzon A."/>
            <person name="Thode G."/>
            <person name="Daga R.R."/>
            <person name="Cruzado L."/>
            <person name="Jimenez J."/>
            <person name="Sanchez M."/>
            <person name="del Rey F."/>
            <person name="Benito J."/>
            <person name="Dominguez A."/>
            <person name="Revuelta J.L."/>
            <person name="Moreno S."/>
            <person name="Armstrong J."/>
            <person name="Forsburg S.L."/>
            <person name="Cerutti L."/>
            <person name="Lowe T."/>
            <person name="McCombie W.R."/>
            <person name="Paulsen I."/>
            <person name="Potashkin J."/>
            <person name="Shpakovski G.V."/>
            <person name="Ussery D."/>
            <person name="Barrell B.G."/>
            <person name="Nurse P."/>
        </authorList>
    </citation>
    <scope>NUCLEOTIDE SEQUENCE [LARGE SCALE GENOMIC DNA]</scope>
    <source>
        <strain>972 / ATCC 24843</strain>
    </source>
</reference>
<reference key="5">
    <citation type="journal article" date="2000" name="Yeast">
        <title>Analysis of 114 kb of DNA sequence from fission yeast chromosome 2 immediately centromere-distal to his5.</title>
        <authorList>
            <person name="Xiang Z."/>
            <person name="Moore K."/>
            <person name="Wood V."/>
            <person name="Rajandream M.A."/>
            <person name="Barrell B.G."/>
            <person name="Skelton J."/>
            <person name="Churcher C.M."/>
            <person name="Lyne M.H."/>
            <person name="Devlin K."/>
            <person name="Gwilliam R."/>
            <person name="Rutherford K.M."/>
            <person name="Aves S.J."/>
        </authorList>
    </citation>
    <scope>NUCLEOTIDE SEQUENCE [GENOMIC DNA]</scope>
</reference>
<reference key="6">
    <citation type="journal article" date="2005" name="J. Cell Sci.">
        <title>The novel fission yeast (1,3)beta-D-glucan synthase catalytic subunit Bgs4p is essential during both cytokinesis and polarized growth.</title>
        <authorList>
            <person name="Cortes J.C."/>
            <person name="Carnero E."/>
            <person name="Ishiguro J."/>
            <person name="Sanchez Y."/>
            <person name="Duran A."/>
            <person name="Ribas J.C."/>
        </authorList>
    </citation>
    <scope>SUBCELLULAR LOCATION</scope>
</reference>
<reference key="7">
    <citation type="journal article" date="2008" name="J. Proteome Res.">
        <title>Phosphoproteome analysis of fission yeast.</title>
        <authorList>
            <person name="Wilson-Grady J.T."/>
            <person name="Villen J."/>
            <person name="Gygi S.P."/>
        </authorList>
    </citation>
    <scope>PHOSPHORYLATION [LARGE SCALE ANALYSIS] AT SER-23; SER-784 AND SER-788</scope>
    <scope>IDENTIFICATION BY MASS SPECTROMETRY</scope>
</reference>
<sequence>MDQYWREQEGRGLFEDDANSYVSDDDTMSSLTRMIYDKNSSRDALHSDYDSSSFNVDSSSVAYPAWNQAGEEAPVTMEGVQEILLDLTNKLGFQKDNMRNIFDYVMVLLDSRASRMSPSSALLTIHADVIGGEHANFSKWYFASHFNDGHAIGFHDMSSPIVETMTLKEAEQAWRDQMAAFSPHRMMVQVCLYFLCWGEANNVRFVPECLCFIFECAYDYYISSEAKDVDAALPKEFYLDSVITPIYRFIHAQLFEILDGKYVRRERDHSQIIGYDDINQLFWSYKGLQEIMCADKTPLLDLPPFMRYRHLSDVEWKSCFYKSYYEYRSWFHNVTNFSRIWVMHISAYWYYSAYNSPNLYTKNYHIRLNNKPPASCRWTACGLAGAIASFITLAAVVFEYIHVPRRYHSARRLWPSMLLLISTLLLNIAPVVFIFASSTKEQHYASRLVVGIVHFFFSLVCVVYYSITPLRNLVGFTTKRSGKNLANRFFTANFTPTSKTGAFVSWCLWITVLVAKFLESYFFLTLNLADSIRFLGAMRPYDCRDYILGAGLCKAQPKILLSLLYLTDLSLFFLDTYLWYILISTIYSLAYAFCLGISVWTPWRELFYRVPRRIYTKLLYTDDMEIVFKPKVLISQVWNAIIISMYREHLISRTQIQELLYHQVPSEKAGYHTLRAPNFFYSQQVKHYKQDLFPANSEAARRISFFAQSLAESIPKTSSIDAMPTFTVLVPHYSEKILLSLREIIREEDQLSRVTLLEYLKQLYPVEWRNFVDDTKLLADENDSVIGSIDNEKNGVNKAYDLPFYCVGFKSATPEYTLRTRIWASLRTQTLYRTINGFSNYSRAIKLLYRTETPELVEWTNGDPVRLDEELDLMANRKFRFCVSMQRYAKFTKEEAENAEFLLRAYPDLQIAYMDEDPQSRHNDERHLYSVLIDGHCPIMENGKRRPKYRIRLSGNPILGDGKSDNQNMSIPYIRGEYVQMIDANQDNYLEECLKIRSILAEFEQLTPPLHSPYSVNAKAADNHPVAILGAREYIFSENTGMLGDVAAGKEQTFGTLFARILSLIGGKLHYGHPDFINVLFMITRGGVSKAQKGLHVNEDIYAGMIALQRGGRIKHCDYYQCGKGRDLGFGSILNFTTKIGTGMAEQMLSREYFNLGTQLPFDRFLSFFYAHAGFHVNNMVIMFSLQLLMLVIINLGAMYTVVPVCRYRQFDSLTASLYPEGCYQLKPVLEWLKRCILSIFIVFGIAFVPLAVCELGERGAIRMVIRLAKQIFSLSPIFEIFTCQIYAQSLIANLTFGGARYIGTSRGFATVRVPFSLLYSRFSGPSLYFGSRLMYMLLFGSITAWLPHYIYFWITLTALCISPFLYNPHQFAWTDFFVDYREFMRWLFRENSRNQANSWIGNCQLCRTRVTGYKRKIYGKKADKIAMDSPRARITTMFYGEILGPLGTLFFTCIPFLFINSQPGNDDETQSTNAFIRLIIMSVAPLVLSAIIAFFFFCLGIMLRPILGDRSKTYGVYLAGVAHFLFVCVDVVVFEVLGYLEGWSFSKTLLGFVAIISIHRFAHKFFIICFLSREFRHDGANLAWWSGRWNGQGFGYMVLTQPWREFVCKTTELNMFAGDFLLSHLLLFLQAPVILIPYIDKLHSIILFWLVPSRQIRPPIYTIRQNKLRRQIVLRYATLYFSLFIAFFVLLILPFVFGKSAAGTSMDKFNLIQPATKIVYSSTKNSSV</sequence>
<gene>
    <name type="primary">bgs1</name>
    <name evidence="7" type="synonym">cps1</name>
    <name evidence="6" type="synonym">drc1</name>
    <name evidence="9" type="ORF">SPBC19G7.05c</name>
</gene>
<name>FKS1_SCHPO</name>
<accession>Q10287</accession>
<evidence type="ECO:0000250" key="1">
    <source>
        <dbReference type="UniProtKB" id="P38631"/>
    </source>
</evidence>
<evidence type="ECO:0000255" key="2"/>
<evidence type="ECO:0000269" key="3">
    <source>
    </source>
</evidence>
<evidence type="ECO:0000269" key="4">
    <source>
    </source>
</evidence>
<evidence type="ECO:0000269" key="5">
    <source>
    </source>
</evidence>
<evidence type="ECO:0000303" key="6">
    <source>
    </source>
</evidence>
<evidence type="ECO:0000303" key="7">
    <source>
    </source>
</evidence>
<evidence type="ECO:0000305" key="8"/>
<evidence type="ECO:0000312" key="9">
    <source>
        <dbReference type="PomBase" id="SPBC19G7.05c"/>
    </source>
</evidence>
<proteinExistence type="evidence at protein level"/>
<dbReference type="EC" id="2.4.1.34" evidence="1"/>
<dbReference type="EMBL" id="D78352">
    <property type="protein sequence ID" value="BAA11369.1"/>
    <property type="molecule type" value="Genomic_DNA"/>
</dbReference>
<dbReference type="EMBL" id="CU329671">
    <property type="protein sequence ID" value="CAA17059.1"/>
    <property type="molecule type" value="Genomic_DNA"/>
</dbReference>
<dbReference type="PIR" id="T43403">
    <property type="entry name" value="T43403"/>
</dbReference>
<dbReference type="RefSeq" id="NP_595971.1">
    <property type="nucleotide sequence ID" value="NM_001021879.2"/>
</dbReference>
<dbReference type="SMR" id="Q10287"/>
<dbReference type="BioGRID" id="277260">
    <property type="interactions" value="45"/>
</dbReference>
<dbReference type="FunCoup" id="Q10287">
    <property type="interactions" value="157"/>
</dbReference>
<dbReference type="STRING" id="284812.Q10287"/>
<dbReference type="CAZy" id="GT48">
    <property type="family name" value="Glycosyltransferase Family 48"/>
</dbReference>
<dbReference type="iPTMnet" id="Q10287"/>
<dbReference type="PaxDb" id="4896-SPBC19G7.05c.1"/>
<dbReference type="EnsemblFungi" id="SPBC19G7.05c.1">
    <property type="protein sequence ID" value="SPBC19G7.05c.1:pep"/>
    <property type="gene ID" value="SPBC19G7.05c"/>
</dbReference>
<dbReference type="GeneID" id="2540737"/>
<dbReference type="KEGG" id="spo:2540737"/>
<dbReference type="PomBase" id="SPBC19G7.05c">
    <property type="gene designation" value="bgs1"/>
</dbReference>
<dbReference type="VEuPathDB" id="FungiDB:SPBC19G7.05c"/>
<dbReference type="eggNOG" id="KOG0916">
    <property type="taxonomic scope" value="Eukaryota"/>
</dbReference>
<dbReference type="HOGENOM" id="CLU_000844_0_1_1"/>
<dbReference type="InParanoid" id="Q10287"/>
<dbReference type="OMA" id="IKHCEYM"/>
<dbReference type="PhylomeDB" id="Q10287"/>
<dbReference type="PRO" id="PR:Q10287"/>
<dbReference type="Proteomes" id="UP000002485">
    <property type="component" value="Chromosome II"/>
</dbReference>
<dbReference type="GO" id="GO:0000148">
    <property type="term" value="C:1,3-beta-D-glucan synthase complex"/>
    <property type="evidence" value="ECO:0000305"/>
    <property type="project" value="PomBase"/>
</dbReference>
<dbReference type="GO" id="GO:0051285">
    <property type="term" value="C:cell cortex of cell tip"/>
    <property type="evidence" value="ECO:0000314"/>
    <property type="project" value="PomBase"/>
</dbReference>
<dbReference type="GO" id="GO:1902716">
    <property type="term" value="C:cell cortex of growing cell tip"/>
    <property type="evidence" value="ECO:0000314"/>
    <property type="project" value="PomBase"/>
</dbReference>
<dbReference type="GO" id="GO:0032153">
    <property type="term" value="C:cell division site"/>
    <property type="evidence" value="ECO:0000314"/>
    <property type="project" value="PomBase"/>
</dbReference>
<dbReference type="GO" id="GO:0051286">
    <property type="term" value="C:cell tip"/>
    <property type="evidence" value="ECO:0000314"/>
    <property type="project" value="PomBase"/>
</dbReference>
<dbReference type="GO" id="GO:0032154">
    <property type="term" value="C:cleavage furrow"/>
    <property type="evidence" value="ECO:0000314"/>
    <property type="project" value="PomBase"/>
</dbReference>
<dbReference type="GO" id="GO:0000935">
    <property type="term" value="C:division septum"/>
    <property type="evidence" value="ECO:0000314"/>
    <property type="project" value="PomBase"/>
</dbReference>
<dbReference type="GO" id="GO:0009277">
    <property type="term" value="C:fungal-type cell wall"/>
    <property type="evidence" value="ECO:0000314"/>
    <property type="project" value="PomBase"/>
</dbReference>
<dbReference type="GO" id="GO:0043332">
    <property type="term" value="C:mating projection tip"/>
    <property type="evidence" value="ECO:0000314"/>
    <property type="project" value="PomBase"/>
</dbReference>
<dbReference type="GO" id="GO:0035840">
    <property type="term" value="C:old growing cell tip"/>
    <property type="evidence" value="ECO:0000314"/>
    <property type="project" value="PomBase"/>
</dbReference>
<dbReference type="GO" id="GO:0005886">
    <property type="term" value="C:plasma membrane"/>
    <property type="evidence" value="ECO:0000318"/>
    <property type="project" value="GO_Central"/>
</dbReference>
<dbReference type="GO" id="GO:0003843">
    <property type="term" value="F:1,3-beta-D-glucan synthase activity"/>
    <property type="evidence" value="ECO:0000315"/>
    <property type="project" value="PomBase"/>
</dbReference>
<dbReference type="GO" id="GO:0006075">
    <property type="term" value="P:(1-&gt;3)-beta-D-glucan biosynthetic process"/>
    <property type="evidence" value="ECO:0000318"/>
    <property type="project" value="GO_Central"/>
</dbReference>
<dbReference type="GO" id="GO:0000747">
    <property type="term" value="P:conjugation with cellular fusion"/>
    <property type="evidence" value="ECO:0000315"/>
    <property type="project" value="PomBase"/>
</dbReference>
<dbReference type="GO" id="GO:0071970">
    <property type="term" value="P:fungal-type cell wall (1-&gt;3)-beta-D-glucan biosynthetic process"/>
    <property type="evidence" value="ECO:0000304"/>
    <property type="project" value="PomBase"/>
</dbReference>
<dbReference type="GO" id="GO:0009272">
    <property type="term" value="P:fungal-type cell wall biogenesis"/>
    <property type="evidence" value="ECO:0000315"/>
    <property type="project" value="PomBase"/>
</dbReference>
<dbReference type="GO" id="GO:0051278">
    <property type="term" value="P:fungal-type cell wall polysaccharide biosynthetic process"/>
    <property type="evidence" value="ECO:0000315"/>
    <property type="project" value="PomBase"/>
</dbReference>
<dbReference type="GO" id="GO:0140278">
    <property type="term" value="P:mitotic division septum assembly"/>
    <property type="evidence" value="ECO:0000315"/>
    <property type="project" value="PomBase"/>
</dbReference>
<dbReference type="GO" id="GO:0031671">
    <property type="term" value="P:primary cell septum biogenesis"/>
    <property type="evidence" value="ECO:0000316"/>
    <property type="project" value="PomBase"/>
</dbReference>
<dbReference type="InterPro" id="IPR026899">
    <property type="entry name" value="FKS1-like_dom1"/>
</dbReference>
<dbReference type="InterPro" id="IPR056261">
    <property type="entry name" value="FKS1-like_dom2"/>
</dbReference>
<dbReference type="InterPro" id="IPR003440">
    <property type="entry name" value="Glyco_trans_48_dom"/>
</dbReference>
<dbReference type="PANTHER" id="PTHR12741:SF105">
    <property type="entry name" value="1,3-BETA-GLUCAN SYNTHASE COMPONENT BGS1"/>
    <property type="match status" value="1"/>
</dbReference>
<dbReference type="PANTHER" id="PTHR12741">
    <property type="entry name" value="LYST-INTERACTING PROTEIN LIP5 DOPAMINE RESPONSIVE PROTEIN DRG-1"/>
    <property type="match status" value="1"/>
</dbReference>
<dbReference type="Pfam" id="PF14288">
    <property type="entry name" value="FKS1_dom1"/>
    <property type="match status" value="1"/>
</dbReference>
<dbReference type="Pfam" id="PF23605">
    <property type="entry name" value="FKS1_dom2"/>
    <property type="match status" value="1"/>
</dbReference>
<dbReference type="Pfam" id="PF02364">
    <property type="entry name" value="Glucan_synthase"/>
    <property type="match status" value="1"/>
</dbReference>
<dbReference type="SMART" id="SM01205">
    <property type="entry name" value="FKS1_dom1"/>
    <property type="match status" value="1"/>
</dbReference>
<organism>
    <name type="scientific">Schizosaccharomyces pombe (strain 972 / ATCC 24843)</name>
    <name type="common">Fission yeast</name>
    <dbReference type="NCBI Taxonomy" id="284812"/>
    <lineage>
        <taxon>Eukaryota</taxon>
        <taxon>Fungi</taxon>
        <taxon>Dikarya</taxon>
        <taxon>Ascomycota</taxon>
        <taxon>Taphrinomycotina</taxon>
        <taxon>Schizosaccharomycetes</taxon>
        <taxon>Schizosaccharomycetales</taxon>
        <taxon>Schizosaccharomycetaceae</taxon>
        <taxon>Schizosaccharomyces</taxon>
    </lineage>
</organism>